<accession>Q1LZE9</accession>
<feature type="signal peptide" evidence="2">
    <location>
        <begin position="1"/>
        <end position="23"/>
    </location>
</feature>
<feature type="chain" id="PRO_0000299364" description="Serine protease 23">
    <location>
        <begin position="24"/>
        <end position="375"/>
    </location>
</feature>
<feature type="active site" description="Charge relay system" evidence="3">
    <location>
        <position position="168"/>
    </location>
</feature>
<feature type="active site" description="Charge relay system" evidence="3">
    <location>
        <position position="232"/>
    </location>
</feature>
<feature type="active site" description="Charge relay system" evidence="3">
    <location>
        <position position="308"/>
    </location>
</feature>
<feature type="glycosylation site" description="N-linked (GlcNAc...) asparagine" evidence="2">
    <location>
        <position position="93"/>
    </location>
</feature>
<feature type="glycosylation site" description="N-linked (GlcNAc...) asparagine" evidence="2">
    <location>
        <position position="199"/>
    </location>
</feature>
<feature type="disulfide bond" evidence="1">
    <location>
        <begin position="153"/>
        <end position="169"/>
    </location>
</feature>
<dbReference type="EC" id="3.4.21.-"/>
<dbReference type="EMBL" id="BC116042">
    <property type="protein sequence ID" value="AAI16043.1"/>
    <property type="molecule type" value="mRNA"/>
</dbReference>
<dbReference type="RefSeq" id="NP_001073775.1">
    <property type="nucleotide sequence ID" value="NM_001080306.1"/>
</dbReference>
<dbReference type="RefSeq" id="XP_005226732.1">
    <property type="nucleotide sequence ID" value="XM_005226675.5"/>
</dbReference>
<dbReference type="FunCoup" id="Q1LZE9">
    <property type="interactions" value="306"/>
</dbReference>
<dbReference type="STRING" id="9913.ENSBTAP00000020194"/>
<dbReference type="GlyCosmos" id="Q1LZE9">
    <property type="glycosylation" value="2 sites, No reported glycans"/>
</dbReference>
<dbReference type="GlyGen" id="Q1LZE9">
    <property type="glycosylation" value="2 sites"/>
</dbReference>
<dbReference type="PaxDb" id="9913-ENSBTAP00000020194"/>
<dbReference type="Ensembl" id="ENSBTAT00000020194.5">
    <property type="protein sequence ID" value="ENSBTAP00000020194.3"/>
    <property type="gene ID" value="ENSBTAG00000015177.5"/>
</dbReference>
<dbReference type="Ensembl" id="ENSBTAT00000095203.1">
    <property type="protein sequence ID" value="ENSBTAP00000091063.1"/>
    <property type="gene ID" value="ENSBTAG00000015177.5"/>
</dbReference>
<dbReference type="Ensembl" id="ENSBTAT00000121322.1">
    <property type="protein sequence ID" value="ENSBTAP00000086400.1"/>
    <property type="gene ID" value="ENSBTAG00000015177.5"/>
</dbReference>
<dbReference type="GeneID" id="538575"/>
<dbReference type="KEGG" id="bta:538575"/>
<dbReference type="CTD" id="11098"/>
<dbReference type="VEuPathDB" id="HostDB:ENSBTAG00000015177"/>
<dbReference type="VGNC" id="VGNC:33416">
    <property type="gene designation" value="PRSS23"/>
</dbReference>
<dbReference type="eggNOG" id="ENOG502QV0K">
    <property type="taxonomic scope" value="Eukaryota"/>
</dbReference>
<dbReference type="GeneTree" id="ENSGT00390000000155"/>
<dbReference type="HOGENOM" id="CLU_055829_0_0_1"/>
<dbReference type="InParanoid" id="Q1LZE9"/>
<dbReference type="OMA" id="WIKGNFM"/>
<dbReference type="OrthoDB" id="10037376at2759"/>
<dbReference type="TreeFam" id="TF329011"/>
<dbReference type="Reactome" id="R-BTA-381426">
    <property type="pathway name" value="Regulation of Insulin-like Growth Factor (IGF) transport and uptake by Insulin-like Growth Factor Binding Proteins (IGFBPs)"/>
</dbReference>
<dbReference type="Reactome" id="R-BTA-8957275">
    <property type="pathway name" value="Post-translational protein phosphorylation"/>
</dbReference>
<dbReference type="Proteomes" id="UP000009136">
    <property type="component" value="Chromosome 29"/>
</dbReference>
<dbReference type="Bgee" id="ENSBTAG00000015177">
    <property type="expression patterns" value="Expressed in prostate gland and 105 other cell types or tissues"/>
</dbReference>
<dbReference type="GO" id="GO:0005576">
    <property type="term" value="C:extracellular region"/>
    <property type="evidence" value="ECO:0007669"/>
    <property type="project" value="UniProtKB-SubCell"/>
</dbReference>
<dbReference type="GO" id="GO:0004252">
    <property type="term" value="F:serine-type endopeptidase activity"/>
    <property type="evidence" value="ECO:0007669"/>
    <property type="project" value="InterPro"/>
</dbReference>
<dbReference type="GO" id="GO:0006508">
    <property type="term" value="P:proteolysis"/>
    <property type="evidence" value="ECO:0007669"/>
    <property type="project" value="UniProtKB-KW"/>
</dbReference>
<dbReference type="FunFam" id="2.40.10.10:FF:000040">
    <property type="entry name" value="Serine protease 23"/>
    <property type="match status" value="1"/>
</dbReference>
<dbReference type="FunFam" id="2.40.10.10:FF:000048">
    <property type="entry name" value="serine protease 23"/>
    <property type="match status" value="1"/>
</dbReference>
<dbReference type="Gene3D" id="2.40.10.10">
    <property type="entry name" value="Trypsin-like serine proteases"/>
    <property type="match status" value="2"/>
</dbReference>
<dbReference type="InterPro" id="IPR050966">
    <property type="entry name" value="Glutamyl_endopeptidase"/>
</dbReference>
<dbReference type="InterPro" id="IPR009003">
    <property type="entry name" value="Peptidase_S1_PA"/>
</dbReference>
<dbReference type="InterPro" id="IPR043504">
    <property type="entry name" value="Peptidase_S1_PA_chymotrypsin"/>
</dbReference>
<dbReference type="InterPro" id="IPR001254">
    <property type="entry name" value="Trypsin_dom"/>
</dbReference>
<dbReference type="InterPro" id="IPR018114">
    <property type="entry name" value="TRYPSIN_HIS"/>
</dbReference>
<dbReference type="PANTHER" id="PTHR15462">
    <property type="entry name" value="SERINE PROTEASE"/>
    <property type="match status" value="1"/>
</dbReference>
<dbReference type="PANTHER" id="PTHR15462:SF10">
    <property type="entry name" value="SERINE PROTEASE 23"/>
    <property type="match status" value="1"/>
</dbReference>
<dbReference type="Pfam" id="PF00089">
    <property type="entry name" value="Trypsin"/>
    <property type="match status" value="1"/>
</dbReference>
<dbReference type="SUPFAM" id="SSF50494">
    <property type="entry name" value="Trypsin-like serine proteases"/>
    <property type="match status" value="1"/>
</dbReference>
<dbReference type="PROSITE" id="PS00134">
    <property type="entry name" value="TRYPSIN_HIS"/>
    <property type="match status" value="1"/>
</dbReference>
<reference key="1">
    <citation type="submission" date="2006-05" db="EMBL/GenBank/DDBJ databases">
        <authorList>
            <consortium name="NIH - Mammalian Gene Collection (MGC) project"/>
        </authorList>
    </citation>
    <scope>NUCLEOTIDE SEQUENCE [LARGE SCALE MRNA]</scope>
    <source>
        <strain>Hereford</strain>
        <tissue>Ascending colon</tissue>
    </source>
</reference>
<comment type="subcellular location">
    <subcellularLocation>
        <location evidence="4">Secreted</location>
    </subcellularLocation>
</comment>
<comment type="similarity">
    <text evidence="4">Belongs to the peptidase S1 family.</text>
</comment>
<keyword id="KW-1015">Disulfide bond</keyword>
<keyword id="KW-0325">Glycoprotein</keyword>
<keyword id="KW-0378">Hydrolase</keyword>
<keyword id="KW-0645">Protease</keyword>
<keyword id="KW-1185">Reference proteome</keyword>
<keyword id="KW-0964">Secreted</keyword>
<keyword id="KW-0720">Serine protease</keyword>
<keyword id="KW-0732">Signal</keyword>
<sequence length="375" mass="42446">MAGTPGHPIFLLLLLRAIGQVSPYSTHWKPTWPAYRLPVVLPQSTFNLAKPDFGAEAKLEVSSSCGPQCHKGTPLPTYEEAKQYLSYETLYANGSRTETQVGIYVLRSGEEQSSGKSRRKRQIYGYDSRFSIFGKDFLLNYPFSTSVKLSTGCTGTLVAEKHVLTAAHCIHDGKTYVKGTQKLRVGFLKPKFKDGRGANDSHSALPEKMKFQWIRVKRTHVPKGWIKGNANDIGMDYDYALLELKKPHKRKFMKIGVSPPAKQLPGGRIHFSGYDNDRPGNLVYRFCDVQDETYDLLYQQCDAQPGASGSGVYVRMWKRQQQKWERKIIGIFSGHQWVDVNGSPQDFNVAVRITPLKYAQICYWIKGNYVDCREG</sequence>
<name>PRS23_BOVIN</name>
<gene>
    <name type="primary">PRSS23</name>
</gene>
<proteinExistence type="evidence at transcript level"/>
<evidence type="ECO:0000250" key="1"/>
<evidence type="ECO:0000255" key="2"/>
<evidence type="ECO:0000255" key="3">
    <source>
        <dbReference type="PROSITE-ProRule" id="PRU10078"/>
    </source>
</evidence>
<evidence type="ECO:0000305" key="4"/>
<organism>
    <name type="scientific">Bos taurus</name>
    <name type="common">Bovine</name>
    <dbReference type="NCBI Taxonomy" id="9913"/>
    <lineage>
        <taxon>Eukaryota</taxon>
        <taxon>Metazoa</taxon>
        <taxon>Chordata</taxon>
        <taxon>Craniata</taxon>
        <taxon>Vertebrata</taxon>
        <taxon>Euteleostomi</taxon>
        <taxon>Mammalia</taxon>
        <taxon>Eutheria</taxon>
        <taxon>Laurasiatheria</taxon>
        <taxon>Artiodactyla</taxon>
        <taxon>Ruminantia</taxon>
        <taxon>Pecora</taxon>
        <taxon>Bovidae</taxon>
        <taxon>Bovinae</taxon>
        <taxon>Bos</taxon>
    </lineage>
</organism>
<protein>
    <recommendedName>
        <fullName>Serine protease 23</fullName>
        <ecNumber>3.4.21.-</ecNumber>
    </recommendedName>
</protein>